<comment type="function">
    <text evidence="1">Binds the lower part of the 30S subunit head. Binds mRNA in the 70S ribosome, positioning it for translation.</text>
</comment>
<comment type="subunit">
    <text evidence="1">Part of the 30S ribosomal subunit. Forms a tight complex with proteins S10 and S14.</text>
</comment>
<comment type="similarity">
    <text evidence="1">Belongs to the universal ribosomal protein uS3 family.</text>
</comment>
<keyword id="KW-0687">Ribonucleoprotein</keyword>
<keyword id="KW-0689">Ribosomal protein</keyword>
<keyword id="KW-0694">RNA-binding</keyword>
<keyword id="KW-0699">rRNA-binding</keyword>
<sequence>MGQKVNPHGLRVGVIKGWDAKWYANKKNFADNLIEDNKIRKFVKKELFSAGISKIEIERAAKRVKLNIYTAKPGVIIGKGGSGIEALKNKLTQFVENKNVLINIVEVKSAEADAQLMAENIAAQLEKRISFRRAMKQTMQRAMKHGIKGVKTACSGRLGGAEIARTEHYHEGTIPLQTLRADIDYGFAEADTTYGKIGVKVWVYNGEVLPTKKVEKEEANA</sequence>
<protein>
    <recommendedName>
        <fullName evidence="1">Small ribosomal subunit protein uS3</fullName>
    </recommendedName>
    <alternativeName>
        <fullName evidence="2">30S ribosomal protein S3</fullName>
    </alternativeName>
</protein>
<organism>
    <name type="scientific">Clostridium beijerinckii (strain ATCC 51743 / NCIMB 8052)</name>
    <name type="common">Clostridium acetobutylicum</name>
    <dbReference type="NCBI Taxonomy" id="290402"/>
    <lineage>
        <taxon>Bacteria</taxon>
        <taxon>Bacillati</taxon>
        <taxon>Bacillota</taxon>
        <taxon>Clostridia</taxon>
        <taxon>Eubacteriales</taxon>
        <taxon>Clostridiaceae</taxon>
        <taxon>Clostridium</taxon>
    </lineage>
</organism>
<evidence type="ECO:0000255" key="1">
    <source>
        <dbReference type="HAMAP-Rule" id="MF_01309"/>
    </source>
</evidence>
<evidence type="ECO:0000305" key="2"/>
<name>RS3_CLOB8</name>
<feature type="chain" id="PRO_1000086107" description="Small ribosomal subunit protein uS3">
    <location>
        <begin position="1"/>
        <end position="221"/>
    </location>
</feature>
<feature type="domain" description="KH type-2" evidence="1">
    <location>
        <begin position="39"/>
        <end position="108"/>
    </location>
</feature>
<dbReference type="EMBL" id="CP000721">
    <property type="protein sequence ID" value="ABR32347.1"/>
    <property type="molecule type" value="Genomic_DNA"/>
</dbReference>
<dbReference type="RefSeq" id="WP_011967516.1">
    <property type="nucleotide sequence ID" value="NC_009617.1"/>
</dbReference>
<dbReference type="SMR" id="A6LPR7"/>
<dbReference type="GeneID" id="66343047"/>
<dbReference type="KEGG" id="cbe:Cbei_0157"/>
<dbReference type="eggNOG" id="COG0092">
    <property type="taxonomic scope" value="Bacteria"/>
</dbReference>
<dbReference type="HOGENOM" id="CLU_058591_0_2_9"/>
<dbReference type="Proteomes" id="UP000000565">
    <property type="component" value="Chromosome"/>
</dbReference>
<dbReference type="GO" id="GO:0022627">
    <property type="term" value="C:cytosolic small ribosomal subunit"/>
    <property type="evidence" value="ECO:0007669"/>
    <property type="project" value="TreeGrafter"/>
</dbReference>
<dbReference type="GO" id="GO:0003729">
    <property type="term" value="F:mRNA binding"/>
    <property type="evidence" value="ECO:0007669"/>
    <property type="project" value="UniProtKB-UniRule"/>
</dbReference>
<dbReference type="GO" id="GO:0019843">
    <property type="term" value="F:rRNA binding"/>
    <property type="evidence" value="ECO:0007669"/>
    <property type="project" value="UniProtKB-UniRule"/>
</dbReference>
<dbReference type="GO" id="GO:0003735">
    <property type="term" value="F:structural constituent of ribosome"/>
    <property type="evidence" value="ECO:0007669"/>
    <property type="project" value="InterPro"/>
</dbReference>
<dbReference type="GO" id="GO:0006412">
    <property type="term" value="P:translation"/>
    <property type="evidence" value="ECO:0007669"/>
    <property type="project" value="UniProtKB-UniRule"/>
</dbReference>
<dbReference type="CDD" id="cd02412">
    <property type="entry name" value="KH-II_30S_S3"/>
    <property type="match status" value="1"/>
</dbReference>
<dbReference type="FunFam" id="3.30.1140.32:FF:000002">
    <property type="entry name" value="30S ribosomal protein S3"/>
    <property type="match status" value="1"/>
</dbReference>
<dbReference type="FunFam" id="3.30.300.20:FF:000001">
    <property type="entry name" value="30S ribosomal protein S3"/>
    <property type="match status" value="1"/>
</dbReference>
<dbReference type="Gene3D" id="3.30.300.20">
    <property type="match status" value="1"/>
</dbReference>
<dbReference type="Gene3D" id="3.30.1140.32">
    <property type="entry name" value="Ribosomal protein S3, C-terminal domain"/>
    <property type="match status" value="1"/>
</dbReference>
<dbReference type="HAMAP" id="MF_01309_B">
    <property type="entry name" value="Ribosomal_uS3_B"/>
    <property type="match status" value="1"/>
</dbReference>
<dbReference type="InterPro" id="IPR004087">
    <property type="entry name" value="KH_dom"/>
</dbReference>
<dbReference type="InterPro" id="IPR015946">
    <property type="entry name" value="KH_dom-like_a/b"/>
</dbReference>
<dbReference type="InterPro" id="IPR004044">
    <property type="entry name" value="KH_dom_type_2"/>
</dbReference>
<dbReference type="InterPro" id="IPR009019">
    <property type="entry name" value="KH_sf_prok-type"/>
</dbReference>
<dbReference type="InterPro" id="IPR036419">
    <property type="entry name" value="Ribosomal_S3_C_sf"/>
</dbReference>
<dbReference type="InterPro" id="IPR005704">
    <property type="entry name" value="Ribosomal_uS3_bac-typ"/>
</dbReference>
<dbReference type="InterPro" id="IPR001351">
    <property type="entry name" value="Ribosomal_uS3_C"/>
</dbReference>
<dbReference type="InterPro" id="IPR018280">
    <property type="entry name" value="Ribosomal_uS3_CS"/>
</dbReference>
<dbReference type="NCBIfam" id="TIGR01009">
    <property type="entry name" value="rpsC_bact"/>
    <property type="match status" value="1"/>
</dbReference>
<dbReference type="PANTHER" id="PTHR11760">
    <property type="entry name" value="30S/40S RIBOSOMAL PROTEIN S3"/>
    <property type="match status" value="1"/>
</dbReference>
<dbReference type="PANTHER" id="PTHR11760:SF19">
    <property type="entry name" value="SMALL RIBOSOMAL SUBUNIT PROTEIN US3C"/>
    <property type="match status" value="1"/>
</dbReference>
<dbReference type="Pfam" id="PF07650">
    <property type="entry name" value="KH_2"/>
    <property type="match status" value="1"/>
</dbReference>
<dbReference type="Pfam" id="PF00189">
    <property type="entry name" value="Ribosomal_S3_C"/>
    <property type="match status" value="1"/>
</dbReference>
<dbReference type="SMART" id="SM00322">
    <property type="entry name" value="KH"/>
    <property type="match status" value="1"/>
</dbReference>
<dbReference type="SUPFAM" id="SSF54814">
    <property type="entry name" value="Prokaryotic type KH domain (KH-domain type II)"/>
    <property type="match status" value="1"/>
</dbReference>
<dbReference type="SUPFAM" id="SSF54821">
    <property type="entry name" value="Ribosomal protein S3 C-terminal domain"/>
    <property type="match status" value="1"/>
</dbReference>
<dbReference type="PROSITE" id="PS50823">
    <property type="entry name" value="KH_TYPE_2"/>
    <property type="match status" value="1"/>
</dbReference>
<dbReference type="PROSITE" id="PS00548">
    <property type="entry name" value="RIBOSOMAL_S3"/>
    <property type="match status" value="1"/>
</dbReference>
<accession>A6LPR7</accession>
<reference key="1">
    <citation type="submission" date="2007-06" db="EMBL/GenBank/DDBJ databases">
        <title>Complete sequence of Clostridium beijerinckii NCIMB 8052.</title>
        <authorList>
            <consortium name="US DOE Joint Genome Institute"/>
            <person name="Copeland A."/>
            <person name="Lucas S."/>
            <person name="Lapidus A."/>
            <person name="Barry K."/>
            <person name="Detter J.C."/>
            <person name="Glavina del Rio T."/>
            <person name="Hammon N."/>
            <person name="Israni S."/>
            <person name="Dalin E."/>
            <person name="Tice H."/>
            <person name="Pitluck S."/>
            <person name="Sims D."/>
            <person name="Brettin T."/>
            <person name="Bruce D."/>
            <person name="Tapia R."/>
            <person name="Brainard J."/>
            <person name="Schmutz J."/>
            <person name="Larimer F."/>
            <person name="Land M."/>
            <person name="Hauser L."/>
            <person name="Kyrpides N."/>
            <person name="Mikhailova N."/>
            <person name="Bennet G."/>
            <person name="Cann I."/>
            <person name="Chen J.-S."/>
            <person name="Contreras A.L."/>
            <person name="Jones D."/>
            <person name="Kashket E."/>
            <person name="Mitchell W."/>
            <person name="Stoddard S."/>
            <person name="Schwarz W."/>
            <person name="Qureshi N."/>
            <person name="Young M."/>
            <person name="Shi Z."/>
            <person name="Ezeji T."/>
            <person name="White B."/>
            <person name="Blaschek H."/>
            <person name="Richardson P."/>
        </authorList>
    </citation>
    <scope>NUCLEOTIDE SEQUENCE [LARGE SCALE GENOMIC DNA]</scope>
    <source>
        <strain>ATCC 51743 / NCIMB 8052</strain>
    </source>
</reference>
<gene>
    <name evidence="1" type="primary">rpsC</name>
    <name type="ordered locus">Cbei_0157</name>
</gene>
<proteinExistence type="inferred from homology"/>